<sequence>MAELDPFGAPAGAPGGPALGNGVAGAGEEDPAAAFLAQQESEIAGIENDEAFAILDGGAPGPQPHGEPPGGPDAVDGVMNGEYYQESNGPTDSYAAISQVDRLQSEPESIRKWREEQMERLEALDANSRKQEAEWKEKAIKELEEWYARQDEQLQKTKANNRVADEAFYKQPFADVIGYVTNINHPCYSLEQAAEEAFVNDIDESSPGTEWERVARLCDFNPKSSKQAKDVSRMRSVLISLKQAPLVH</sequence>
<comment type="function">
    <text evidence="12 13">Clathrin is the major protein of the polyhedral coat of coated pits and vesicles. Acts as a component of the TACC3/ch-TOG/clathrin complex proposed to contribute to stabilization of kinetochore fibers of the mitotic spindle by acting as inter-microtubule bridge (PubMed:15858577, PubMed:21297582).</text>
</comment>
<comment type="subunit">
    <text evidence="4 5">Clathrin coats are formed from molecules containing 3 heavy chains and 3 light chains. Interacts with CALY; the interaction stimulates clathrin self-assembly and clathrin-mediated endocytosis. Interacts with CKAP5 and TACC3 forming the TACC3/ch-TOG/clathrin complex located at spindle inter-microtubules bridges; the complex implicates clathrin triskelions.</text>
</comment>
<comment type="interaction">
    <interactant intactId="EBI-1171169">
        <id>P09496</id>
    </interactant>
    <interactant intactId="EBI-10904725">
        <id>Q9NYX4</id>
        <label>CALY</label>
    </interactant>
    <organismsDiffer>false</organismsDiffer>
    <experiments>4</experiments>
</comment>
<comment type="interaction">
    <interactant intactId="EBI-1171169">
        <id>P09496</id>
    </interactant>
    <interactant intactId="EBI-354967">
        <id>Q00610</id>
        <label>CLTC</label>
    </interactant>
    <organismsDiffer>false</organismsDiffer>
    <experiments>4</experiments>
</comment>
<comment type="interaction">
    <interactant intactId="EBI-1171169">
        <id>P09496</id>
    </interactant>
    <interactant intactId="EBI-2554984">
        <id>Q9Y6A5</id>
        <label>TACC3</label>
    </interactant>
    <organismsDiffer>false</organismsDiffer>
    <experiments>3</experiments>
</comment>
<comment type="interaction">
    <interactant intactId="EBI-4401010">
        <id>P09496-2</id>
    </interactant>
    <interactant intactId="EBI-718729">
        <id>P55212</id>
        <label>CASP6</label>
    </interactant>
    <organismsDiffer>false</organismsDiffer>
    <experiments>3</experiments>
</comment>
<comment type="interaction">
    <interactant intactId="EBI-4401010">
        <id>P09496-2</id>
    </interactant>
    <interactant intactId="EBI-16041593">
        <id>O94985-2</id>
        <label>CLSTN1</label>
    </interactant>
    <organismsDiffer>false</organismsDiffer>
    <experiments>3</experiments>
</comment>
<comment type="interaction">
    <interactant intactId="EBI-4401010">
        <id>P09496-2</id>
    </interactant>
    <interactant intactId="EBI-745535">
        <id>Q8NI60</id>
        <label>COQ8A</label>
    </interactant>
    <organismsDiffer>false</organismsDiffer>
    <experiments>3</experiments>
</comment>
<comment type="interaction">
    <interactant intactId="EBI-4401010">
        <id>P09496-2</id>
    </interactant>
    <interactant intactId="EBI-473886">
        <id>O00291</id>
        <label>HIP1</label>
    </interactant>
    <organismsDiffer>false</organismsDiffer>
    <experiments>3</experiments>
</comment>
<comment type="interaction">
    <interactant intactId="EBI-4401010">
        <id>P09496-2</id>
    </interactant>
    <interactant intactId="EBI-21591415">
        <id>P13473-2</id>
        <label>LAMP2</label>
    </interactant>
    <organismsDiffer>false</organismsDiffer>
    <experiments>3</experiments>
</comment>
<comment type="interaction">
    <interactant intactId="EBI-4401010">
        <id>P09496-2</id>
    </interactant>
    <interactant intactId="EBI-5280197">
        <id>O75400-2</id>
        <label>PRPF40A</label>
    </interactant>
    <organismsDiffer>false</organismsDiffer>
    <experiments>3</experiments>
</comment>
<comment type="interaction">
    <interactant intactId="EBI-4401010">
        <id>P09496-2</id>
    </interactant>
    <interactant intactId="EBI-2623095">
        <id>Q9Y371</id>
        <label>SH3GLB1</label>
    </interactant>
    <organismsDiffer>false</organismsDiffer>
    <experiments>3</experiments>
</comment>
<comment type="subcellular location">
    <subcellularLocation>
        <location>Cytoplasmic vesicle membrane</location>
        <topology>Peripheral membrane protein</topology>
        <orientation>Cytoplasmic side</orientation>
    </subcellularLocation>
    <subcellularLocation>
        <location>Membrane</location>
        <location>Coated pit</location>
        <topology>Peripheral membrane protein</topology>
        <orientation>Cytoplasmic side</orientation>
    </subcellularLocation>
    <subcellularLocation>
        <location evidence="5 12">Cytoplasm</location>
        <location evidence="5 12">Cytoskeleton</location>
        <location evidence="5 12">Spindle</location>
    </subcellularLocation>
    <text evidence="11">Cytoplasmic face of coated pits and vesicles. In complex with TACC3 and CKAP5 (forming the TACC3/ch-TOG/clathrin complex) localized to inter-microtubule bridges in mitotic spindles.</text>
</comment>
<comment type="alternative products">
    <event type="alternative splicing"/>
    <isoform>
        <id>P09496-1</id>
        <name>Brain</name>
        <sequence type="displayed"/>
    </isoform>
    <isoform>
        <id>P09496-2</id>
        <name>Non-brain</name>
        <sequence type="described" ref="VSP_001095"/>
    </isoform>
    <isoform>
        <id>P09496-3</id>
        <name>3</name>
        <sequence type="described" ref="VSP_024238"/>
    </isoform>
    <isoform>
        <id>P09496-4</id>
        <name>4</name>
        <sequence type="described" ref="VSP_043239"/>
    </isoform>
    <isoform>
        <id>P09496-5</id>
        <name>5</name>
        <sequence type="described" ref="VSP_047168 VSP_001095"/>
    </isoform>
</comment>
<comment type="similarity">
    <text evidence="11">Belongs to the clathrin light chain family.</text>
</comment>
<name>CLCA_HUMAN</name>
<accession>P09496</accession>
<accession>A8K4W3</accession>
<accession>B4DIN1</accession>
<accession>F5H6N3</accession>
<accession>Q2XPN5</accession>
<accession>Q53XZ1</accession>
<gene>
    <name type="primary">CLTA</name>
</gene>
<keyword id="KW-0002">3D-structure</keyword>
<keyword id="KW-0007">Acetylation</keyword>
<keyword id="KW-0025">Alternative splicing</keyword>
<keyword id="KW-0106">Calcium</keyword>
<keyword id="KW-0131">Cell cycle</keyword>
<keyword id="KW-0132">Cell division</keyword>
<keyword id="KW-0168">Coated pit</keyword>
<keyword id="KW-0963">Cytoplasm</keyword>
<keyword id="KW-0968">Cytoplasmic vesicle</keyword>
<keyword id="KW-0206">Cytoskeleton</keyword>
<keyword id="KW-0472">Membrane</keyword>
<keyword id="KW-0498">Mitosis</keyword>
<keyword id="KW-0597">Phosphoprotein</keyword>
<keyword id="KW-1267">Proteomics identification</keyword>
<keyword id="KW-1185">Reference proteome</keyword>
<proteinExistence type="evidence at protein level"/>
<dbReference type="EMBL" id="M20471">
    <property type="protein sequence ID" value="AAA51817.1"/>
    <property type="molecule type" value="mRNA"/>
</dbReference>
<dbReference type="EMBL" id="M20472">
    <property type="protein sequence ID" value="AAA59505.1"/>
    <property type="molecule type" value="mRNA"/>
</dbReference>
<dbReference type="EMBL" id="DQ270158">
    <property type="protein sequence ID" value="ABB76683.1"/>
    <property type="molecule type" value="mRNA"/>
</dbReference>
<dbReference type="EMBL" id="BT007170">
    <property type="protein sequence ID" value="AAP35834.1"/>
    <property type="molecule type" value="mRNA"/>
</dbReference>
<dbReference type="EMBL" id="AK291078">
    <property type="protein sequence ID" value="BAF83767.1"/>
    <property type="molecule type" value="mRNA"/>
</dbReference>
<dbReference type="EMBL" id="AK295692">
    <property type="protein sequence ID" value="BAG58543.1"/>
    <property type="molecule type" value="mRNA"/>
</dbReference>
<dbReference type="EMBL" id="AL158830">
    <property type="status" value="NOT_ANNOTATED_CDS"/>
    <property type="molecule type" value="Genomic_DNA"/>
</dbReference>
<dbReference type="EMBL" id="AL161792">
    <property type="status" value="NOT_ANNOTATED_CDS"/>
    <property type="molecule type" value="Genomic_DNA"/>
</dbReference>
<dbReference type="EMBL" id="CH471071">
    <property type="protein sequence ID" value="EAW58312.1"/>
    <property type="molecule type" value="Genomic_DNA"/>
</dbReference>
<dbReference type="EMBL" id="BC009201">
    <property type="protein sequence ID" value="AAH09201.1"/>
    <property type="molecule type" value="mRNA"/>
</dbReference>
<dbReference type="EMBL" id="BC019287">
    <property type="protein sequence ID" value="AAH19287.1"/>
    <property type="molecule type" value="mRNA"/>
</dbReference>
<dbReference type="CCDS" id="CCDS43802.1">
    <molecule id="P09496-3"/>
</dbReference>
<dbReference type="CCDS" id="CCDS55306.1">
    <molecule id="P09496-4"/>
</dbReference>
<dbReference type="CCDS" id="CCDS55307.1">
    <molecule id="P09496-5"/>
</dbReference>
<dbReference type="CCDS" id="CCDS6600.1">
    <molecule id="P09496-2"/>
</dbReference>
<dbReference type="CCDS" id="CCDS6601.1">
    <molecule id="P09496-1"/>
</dbReference>
<dbReference type="PIR" id="A31775">
    <property type="entry name" value="A31775"/>
</dbReference>
<dbReference type="RefSeq" id="NP_001070145.1">
    <molecule id="P09496-3"/>
    <property type="nucleotide sequence ID" value="NM_001076677.3"/>
</dbReference>
<dbReference type="RefSeq" id="NP_001171689.1">
    <molecule id="P09496-4"/>
    <property type="nucleotide sequence ID" value="NM_001184760.2"/>
</dbReference>
<dbReference type="RefSeq" id="NP_001171691.1">
    <molecule id="P09496-5"/>
    <property type="nucleotide sequence ID" value="NM_001184762.2"/>
</dbReference>
<dbReference type="RefSeq" id="NP_001824.1">
    <molecule id="P09496-2"/>
    <property type="nucleotide sequence ID" value="NM_001833.4"/>
</dbReference>
<dbReference type="RefSeq" id="NP_009027.1">
    <molecule id="P09496-1"/>
    <property type="nucleotide sequence ID" value="NM_007096.4"/>
</dbReference>
<dbReference type="PDB" id="6E5N">
    <property type="method" value="NMR"/>
    <property type="chains" value="A=46-61"/>
</dbReference>
<dbReference type="PDBsum" id="6E5N"/>
<dbReference type="SMR" id="P09496"/>
<dbReference type="BioGRID" id="107621">
    <property type="interactions" value="369"/>
</dbReference>
<dbReference type="FunCoup" id="P09496">
    <property type="interactions" value="3210"/>
</dbReference>
<dbReference type="IntAct" id="P09496">
    <property type="interactions" value="243"/>
</dbReference>
<dbReference type="MINT" id="P09496"/>
<dbReference type="STRING" id="9606.ENSP00000242285"/>
<dbReference type="ChEMBL" id="CHEMBL4295706"/>
<dbReference type="TCDB" id="8.A.137.1.1">
    <property type="family name" value="the clathrin (clathrin) family"/>
</dbReference>
<dbReference type="GlyGen" id="P09496">
    <property type="glycosylation" value="2 sites, 1 O-linked glycan (1 site)"/>
</dbReference>
<dbReference type="iPTMnet" id="P09496"/>
<dbReference type="MetOSite" id="P09496"/>
<dbReference type="PhosphoSitePlus" id="P09496"/>
<dbReference type="SwissPalm" id="P09496"/>
<dbReference type="BioMuta" id="CLTA"/>
<dbReference type="DMDM" id="116501"/>
<dbReference type="OGP" id="P09496"/>
<dbReference type="jPOST" id="P09496"/>
<dbReference type="MassIVE" id="P09496"/>
<dbReference type="PaxDb" id="9606-ENSP00000242285"/>
<dbReference type="PeptideAtlas" id="P09496"/>
<dbReference type="ProteomicsDB" id="27239"/>
<dbReference type="ProteomicsDB" id="52236">
    <molecule id="P09496-1"/>
</dbReference>
<dbReference type="ProteomicsDB" id="52237">
    <molecule id="P09496-2"/>
</dbReference>
<dbReference type="ProteomicsDB" id="52238">
    <molecule id="P09496-3"/>
</dbReference>
<dbReference type="ProteomicsDB" id="52239">
    <molecule id="P09496-4"/>
</dbReference>
<dbReference type="Pumba" id="P09496"/>
<dbReference type="TopDownProteomics" id="P09496-1">
    <molecule id="P09496-1"/>
</dbReference>
<dbReference type="TopDownProteomics" id="P09496-2">
    <molecule id="P09496-2"/>
</dbReference>
<dbReference type="Antibodypedia" id="3626">
    <property type="antibodies" value="454 antibodies from 34 providers"/>
</dbReference>
<dbReference type="DNASU" id="1211"/>
<dbReference type="Ensembl" id="ENST00000242285.11">
    <molecule id="P09496-1"/>
    <property type="protein sequence ID" value="ENSP00000242285.6"/>
    <property type="gene ID" value="ENSG00000122705.18"/>
</dbReference>
<dbReference type="Ensembl" id="ENST00000345519.10">
    <molecule id="P09496-2"/>
    <property type="protein sequence ID" value="ENSP00000242284.6"/>
    <property type="gene ID" value="ENSG00000122705.18"/>
</dbReference>
<dbReference type="Ensembl" id="ENST00000396603.6">
    <molecule id="P09496-3"/>
    <property type="protein sequence ID" value="ENSP00000379848.2"/>
    <property type="gene ID" value="ENSG00000122705.18"/>
</dbReference>
<dbReference type="Ensembl" id="ENST00000470744.5">
    <molecule id="P09496-4"/>
    <property type="protein sequence ID" value="ENSP00000419746.1"/>
    <property type="gene ID" value="ENSG00000122705.18"/>
</dbReference>
<dbReference type="Ensembl" id="ENST00000540080.5">
    <molecule id="P09496-5"/>
    <property type="protein sequence ID" value="ENSP00000437508.1"/>
    <property type="gene ID" value="ENSG00000122705.18"/>
</dbReference>
<dbReference type="GeneID" id="1211"/>
<dbReference type="KEGG" id="hsa:1211"/>
<dbReference type="MANE-Select" id="ENST00000345519.10">
    <molecule id="P09496-2"/>
    <property type="protein sequence ID" value="ENSP00000242284.6"/>
    <property type="RefSeq nucleotide sequence ID" value="NM_001833.4"/>
    <property type="RefSeq protein sequence ID" value="NP_001824.1"/>
</dbReference>
<dbReference type="UCSC" id="uc003zzc.4">
    <molecule id="P09496-1"/>
    <property type="organism name" value="human"/>
</dbReference>
<dbReference type="AGR" id="HGNC:2090"/>
<dbReference type="CTD" id="1211"/>
<dbReference type="DisGeNET" id="1211"/>
<dbReference type="GeneCards" id="CLTA"/>
<dbReference type="HGNC" id="HGNC:2090">
    <property type="gene designation" value="CLTA"/>
</dbReference>
<dbReference type="HPA" id="ENSG00000122705">
    <property type="expression patterns" value="Low tissue specificity"/>
</dbReference>
<dbReference type="MIM" id="118960">
    <property type="type" value="gene"/>
</dbReference>
<dbReference type="neXtProt" id="NX_P09496"/>
<dbReference type="OpenTargets" id="ENSG00000122705"/>
<dbReference type="PharmGKB" id="PA26616"/>
<dbReference type="VEuPathDB" id="HostDB:ENSG00000122705"/>
<dbReference type="eggNOG" id="KOG4031">
    <property type="taxonomic scope" value="Eukaryota"/>
</dbReference>
<dbReference type="GeneTree" id="ENSGT00940000157347"/>
<dbReference type="InParanoid" id="P09496"/>
<dbReference type="OMA" id="XAAEEAF"/>
<dbReference type="OrthoDB" id="5512at2759"/>
<dbReference type="PAN-GO" id="P09496">
    <property type="GO annotations" value="6 GO annotations based on evolutionary models"/>
</dbReference>
<dbReference type="PhylomeDB" id="P09496"/>
<dbReference type="TreeFam" id="TF313162"/>
<dbReference type="PathwayCommons" id="P09496"/>
<dbReference type="Reactome" id="R-HSA-168275">
    <property type="pathway name" value="Entry of Influenza Virion into Host Cell via Endocytosis"/>
</dbReference>
<dbReference type="Reactome" id="R-HSA-177504">
    <property type="pathway name" value="Retrograde neurotrophin signalling"/>
</dbReference>
<dbReference type="Reactome" id="R-HSA-190873">
    <property type="pathway name" value="Gap junction degradation"/>
</dbReference>
<dbReference type="Reactome" id="R-HSA-196025">
    <property type="pathway name" value="Formation of annular gap junctions"/>
</dbReference>
<dbReference type="Reactome" id="R-HSA-2132295">
    <property type="pathway name" value="MHC class II antigen presentation"/>
</dbReference>
<dbReference type="Reactome" id="R-HSA-3928665">
    <property type="pathway name" value="EPH-ephrin mediated repulsion of cells"/>
</dbReference>
<dbReference type="Reactome" id="R-HSA-432720">
    <property type="pathway name" value="Lysosome Vesicle Biogenesis"/>
</dbReference>
<dbReference type="Reactome" id="R-HSA-432722">
    <molecule id="P09496-1"/>
    <property type="pathway name" value="Golgi Associated Vesicle Biogenesis"/>
</dbReference>
<dbReference type="Reactome" id="R-HSA-437239">
    <property type="pathway name" value="Recycling pathway of L1"/>
</dbReference>
<dbReference type="Reactome" id="R-HSA-5099900">
    <property type="pathway name" value="WNT5A-dependent internalization of FZD4"/>
</dbReference>
<dbReference type="Reactome" id="R-HSA-5140745">
    <property type="pathway name" value="WNT5A-dependent internalization of FZD2, FZD5 and ROR2"/>
</dbReference>
<dbReference type="Reactome" id="R-HSA-8856825">
    <property type="pathway name" value="Cargo recognition for clathrin-mediated endocytosis"/>
</dbReference>
<dbReference type="Reactome" id="R-HSA-8856828">
    <property type="pathway name" value="Clathrin-mediated endocytosis"/>
</dbReference>
<dbReference type="Reactome" id="R-HSA-8866427">
    <property type="pathway name" value="VLDLR internalisation and degradation"/>
</dbReference>
<dbReference type="Reactome" id="R-HSA-8964038">
    <property type="pathway name" value="LDL clearance"/>
</dbReference>
<dbReference type="SignaLink" id="P09496"/>
<dbReference type="SIGNOR" id="P09496"/>
<dbReference type="BioGRID-ORCS" id="1211">
    <property type="hits" value="31 hits in 1164 CRISPR screens"/>
</dbReference>
<dbReference type="ChiTaRS" id="CLTA">
    <property type="organism name" value="human"/>
</dbReference>
<dbReference type="GenomeRNAi" id="1211"/>
<dbReference type="Pharos" id="P09496">
    <property type="development level" value="Tbio"/>
</dbReference>
<dbReference type="PRO" id="PR:P09496"/>
<dbReference type="Proteomes" id="UP000005640">
    <property type="component" value="Chromosome 9"/>
</dbReference>
<dbReference type="RNAct" id="P09496">
    <property type="molecule type" value="protein"/>
</dbReference>
<dbReference type="Bgee" id="ENSG00000122705">
    <property type="expression patterns" value="Expressed in nasal cavity epithelium and 213 other cell types or tissues"/>
</dbReference>
<dbReference type="ExpressionAtlas" id="P09496">
    <property type="expression patterns" value="baseline and differential"/>
</dbReference>
<dbReference type="GO" id="GO:0030118">
    <property type="term" value="C:clathrin coat"/>
    <property type="evidence" value="ECO:0000315"/>
    <property type="project" value="CAFA"/>
</dbReference>
<dbReference type="GO" id="GO:0030132">
    <property type="term" value="C:clathrin coat of coated pit"/>
    <property type="evidence" value="ECO:0007669"/>
    <property type="project" value="InterPro"/>
</dbReference>
<dbReference type="GO" id="GO:0030130">
    <property type="term" value="C:clathrin coat of trans-Golgi network vesicle"/>
    <property type="evidence" value="ECO:0007669"/>
    <property type="project" value="InterPro"/>
</dbReference>
<dbReference type="GO" id="GO:0071439">
    <property type="term" value="C:clathrin complex"/>
    <property type="evidence" value="ECO:0000314"/>
    <property type="project" value="FlyBase"/>
</dbReference>
<dbReference type="GO" id="GO:0030125">
    <property type="term" value="C:clathrin vesicle coat"/>
    <property type="evidence" value="ECO:0000318"/>
    <property type="project" value="GO_Central"/>
</dbReference>
<dbReference type="GO" id="GO:0045334">
    <property type="term" value="C:clathrin-coated endocytic vesicle"/>
    <property type="evidence" value="ECO:0000303"/>
    <property type="project" value="ARUK-UCL"/>
</dbReference>
<dbReference type="GO" id="GO:0031410">
    <property type="term" value="C:cytoplasmic vesicle"/>
    <property type="evidence" value="ECO:0000250"/>
    <property type="project" value="BHF-UCL"/>
</dbReference>
<dbReference type="GO" id="GO:0005829">
    <property type="term" value="C:cytosol"/>
    <property type="evidence" value="ECO:0000304"/>
    <property type="project" value="Reactome"/>
</dbReference>
<dbReference type="GO" id="GO:0036020">
    <property type="term" value="C:endolysosome membrane"/>
    <property type="evidence" value="ECO:0000304"/>
    <property type="project" value="Reactome"/>
</dbReference>
<dbReference type="GO" id="GO:0005768">
    <property type="term" value="C:endosome"/>
    <property type="evidence" value="ECO:0000314"/>
    <property type="project" value="HPA"/>
</dbReference>
<dbReference type="GO" id="GO:0005794">
    <property type="term" value="C:Golgi apparatus"/>
    <property type="evidence" value="ECO:0000314"/>
    <property type="project" value="HPA"/>
</dbReference>
<dbReference type="GO" id="GO:0043231">
    <property type="term" value="C:intracellular membrane-bounded organelle"/>
    <property type="evidence" value="ECO:0000314"/>
    <property type="project" value="HPA"/>
</dbReference>
<dbReference type="GO" id="GO:0005764">
    <property type="term" value="C:lysosome"/>
    <property type="evidence" value="ECO:0000314"/>
    <property type="project" value="HPA"/>
</dbReference>
<dbReference type="GO" id="GO:0016020">
    <property type="term" value="C:membrane"/>
    <property type="evidence" value="ECO:0007005"/>
    <property type="project" value="UniProtKB"/>
</dbReference>
<dbReference type="GO" id="GO:0005886">
    <property type="term" value="C:plasma membrane"/>
    <property type="evidence" value="ECO:0000318"/>
    <property type="project" value="GO_Central"/>
</dbReference>
<dbReference type="GO" id="GO:0098843">
    <property type="term" value="C:postsynaptic endocytic zone"/>
    <property type="evidence" value="ECO:0007669"/>
    <property type="project" value="Ensembl"/>
</dbReference>
<dbReference type="GO" id="GO:0098835">
    <property type="term" value="C:presynaptic endocytic zone membrane"/>
    <property type="evidence" value="ECO:0007669"/>
    <property type="project" value="Ensembl"/>
</dbReference>
<dbReference type="GO" id="GO:0005819">
    <property type="term" value="C:spindle"/>
    <property type="evidence" value="ECO:0007669"/>
    <property type="project" value="UniProtKB-SubCell"/>
</dbReference>
<dbReference type="GO" id="GO:0030672">
    <property type="term" value="C:synaptic vesicle membrane"/>
    <property type="evidence" value="ECO:0000318"/>
    <property type="project" value="GO_Central"/>
</dbReference>
<dbReference type="GO" id="GO:0032588">
    <property type="term" value="C:trans-Golgi network membrane"/>
    <property type="evidence" value="ECO:0000304"/>
    <property type="project" value="Reactome"/>
</dbReference>
<dbReference type="GO" id="GO:0032050">
    <property type="term" value="F:clathrin heavy chain binding"/>
    <property type="evidence" value="ECO:0000353"/>
    <property type="project" value="FlyBase"/>
</dbReference>
<dbReference type="GO" id="GO:0051020">
    <property type="term" value="F:GTPase binding"/>
    <property type="evidence" value="ECO:0007669"/>
    <property type="project" value="Ensembl"/>
</dbReference>
<dbReference type="GO" id="GO:0042277">
    <property type="term" value="F:peptide binding"/>
    <property type="evidence" value="ECO:0007669"/>
    <property type="project" value="Ensembl"/>
</dbReference>
<dbReference type="GO" id="GO:0044877">
    <property type="term" value="F:protein-containing complex binding"/>
    <property type="evidence" value="ECO:0007669"/>
    <property type="project" value="Ensembl"/>
</dbReference>
<dbReference type="GO" id="GO:0005198">
    <property type="term" value="F:structural molecule activity"/>
    <property type="evidence" value="ECO:0007669"/>
    <property type="project" value="InterPro"/>
</dbReference>
<dbReference type="GO" id="GO:0051301">
    <property type="term" value="P:cell division"/>
    <property type="evidence" value="ECO:0007669"/>
    <property type="project" value="UniProtKB-KW"/>
</dbReference>
<dbReference type="GO" id="GO:0048268">
    <property type="term" value="P:clathrin coat assembly"/>
    <property type="evidence" value="ECO:0000315"/>
    <property type="project" value="CAFA"/>
</dbReference>
<dbReference type="GO" id="GO:0072583">
    <property type="term" value="P:clathrin-dependent endocytosis"/>
    <property type="evidence" value="ECO:0000318"/>
    <property type="project" value="GO_Central"/>
</dbReference>
<dbReference type="GO" id="GO:0006886">
    <property type="term" value="P:intracellular protein transport"/>
    <property type="evidence" value="ECO:0007669"/>
    <property type="project" value="InterPro"/>
</dbReference>
<dbReference type="GO" id="GO:0048488">
    <property type="term" value="P:synaptic vesicle endocytosis"/>
    <property type="evidence" value="ECO:0007669"/>
    <property type="project" value="Ensembl"/>
</dbReference>
<dbReference type="InterPro" id="IPR000996">
    <property type="entry name" value="Clathrin_L-chain"/>
</dbReference>
<dbReference type="PANTHER" id="PTHR10639">
    <property type="entry name" value="CLATHRIN LIGHT CHAIN"/>
    <property type="match status" value="1"/>
</dbReference>
<dbReference type="PANTHER" id="PTHR10639:SF1">
    <property type="entry name" value="CLATHRIN LIGHT CHAIN A"/>
    <property type="match status" value="1"/>
</dbReference>
<dbReference type="Pfam" id="PF01086">
    <property type="entry name" value="Clathrin_lg_ch"/>
    <property type="match status" value="1"/>
</dbReference>
<dbReference type="PROSITE" id="PS00224">
    <property type="entry name" value="CLATHRIN_LIGHT_CHN_1"/>
    <property type="match status" value="1"/>
</dbReference>
<dbReference type="PROSITE" id="PS00581">
    <property type="entry name" value="CLATHRIN_LIGHT_CHN_2"/>
    <property type="match status" value="1"/>
</dbReference>
<protein>
    <recommendedName>
        <fullName>Clathrin light chain A</fullName>
        <shortName>Lca</shortName>
    </recommendedName>
</protein>
<evidence type="ECO:0000250" key="1">
    <source>
        <dbReference type="UniProtKB" id="O08585"/>
    </source>
</evidence>
<evidence type="ECO:0000250" key="2">
    <source>
        <dbReference type="UniProtKB" id="Q6IRU5"/>
    </source>
</evidence>
<evidence type="ECO:0000256" key="3">
    <source>
        <dbReference type="SAM" id="MobiDB-lite"/>
    </source>
</evidence>
<evidence type="ECO:0000269" key="4">
    <source>
    </source>
</evidence>
<evidence type="ECO:0000269" key="5">
    <source>
    </source>
</evidence>
<evidence type="ECO:0000303" key="6">
    <source>
    </source>
</evidence>
<evidence type="ECO:0000303" key="7">
    <source>
    </source>
</evidence>
<evidence type="ECO:0000303" key="8">
    <source>
    </source>
</evidence>
<evidence type="ECO:0000303" key="9">
    <source ref="2"/>
</evidence>
<evidence type="ECO:0000303" key="10">
    <source ref="4"/>
</evidence>
<evidence type="ECO:0000305" key="11"/>
<evidence type="ECO:0000305" key="12">
    <source>
    </source>
</evidence>
<evidence type="ECO:0000305" key="13">
    <source>
    </source>
</evidence>
<evidence type="ECO:0007744" key="14">
    <source>
    </source>
</evidence>
<evidence type="ECO:0007744" key="15">
    <source>
    </source>
</evidence>
<evidence type="ECO:0007744" key="16">
    <source>
    </source>
</evidence>
<evidence type="ECO:0007829" key="17">
    <source>
        <dbReference type="PDB" id="6E5N"/>
    </source>
</evidence>
<reference key="1">
    <citation type="journal article" date="1988" name="J. Biol. Chem.">
        <title>Structure of human clathrin light chains. Conservation of light chain polymorphism in three mammalian species.</title>
        <authorList>
            <person name="Jackson A.P."/>
            <person name="Parham P."/>
        </authorList>
    </citation>
    <scope>NUCLEOTIDE SEQUENCE [MRNA] (ISOFORMS BRAIN AND NON-BRAIN)</scope>
</reference>
<reference key="2">
    <citation type="submission" date="2003-05" db="EMBL/GenBank/DDBJ databases">
        <title>Cloning of human full-length CDSs in BD Creator(TM) system donor vector.</title>
        <authorList>
            <person name="Kalnine N."/>
            <person name="Chen X."/>
            <person name="Rolfs A."/>
            <person name="Halleck A."/>
            <person name="Hines L."/>
            <person name="Eisenstein S."/>
            <person name="Koundinya M."/>
            <person name="Raphael J."/>
            <person name="Moreira D."/>
            <person name="Kelley T."/>
            <person name="LaBaer J."/>
            <person name="Lin Y."/>
            <person name="Phelan M."/>
            <person name="Farmer A."/>
        </authorList>
    </citation>
    <scope>NUCLEOTIDE SEQUENCE [LARGE SCALE MRNA] (ISOFORM NON-BRAIN)</scope>
</reference>
<reference key="3">
    <citation type="journal article" date="2004" name="Nat. Genet.">
        <title>Complete sequencing and characterization of 21,243 full-length human cDNAs.</title>
        <authorList>
            <person name="Ota T."/>
            <person name="Suzuki Y."/>
            <person name="Nishikawa T."/>
            <person name="Otsuki T."/>
            <person name="Sugiyama T."/>
            <person name="Irie R."/>
            <person name="Wakamatsu A."/>
            <person name="Hayashi K."/>
            <person name="Sato H."/>
            <person name="Nagai K."/>
            <person name="Kimura K."/>
            <person name="Makita H."/>
            <person name="Sekine M."/>
            <person name="Obayashi M."/>
            <person name="Nishi T."/>
            <person name="Shibahara T."/>
            <person name="Tanaka T."/>
            <person name="Ishii S."/>
            <person name="Yamamoto J."/>
            <person name="Saito K."/>
            <person name="Kawai Y."/>
            <person name="Isono Y."/>
            <person name="Nakamura Y."/>
            <person name="Nagahari K."/>
            <person name="Murakami K."/>
            <person name="Yasuda T."/>
            <person name="Iwayanagi T."/>
            <person name="Wagatsuma M."/>
            <person name="Shiratori A."/>
            <person name="Sudo H."/>
            <person name="Hosoiri T."/>
            <person name="Kaku Y."/>
            <person name="Kodaira H."/>
            <person name="Kondo H."/>
            <person name="Sugawara M."/>
            <person name="Takahashi M."/>
            <person name="Kanda K."/>
            <person name="Yokoi T."/>
            <person name="Furuya T."/>
            <person name="Kikkawa E."/>
            <person name="Omura Y."/>
            <person name="Abe K."/>
            <person name="Kamihara K."/>
            <person name="Katsuta N."/>
            <person name="Sato K."/>
            <person name="Tanikawa M."/>
            <person name="Yamazaki M."/>
            <person name="Ninomiya K."/>
            <person name="Ishibashi T."/>
            <person name="Yamashita H."/>
            <person name="Murakawa K."/>
            <person name="Fujimori K."/>
            <person name="Tanai H."/>
            <person name="Kimata M."/>
            <person name="Watanabe M."/>
            <person name="Hiraoka S."/>
            <person name="Chiba Y."/>
            <person name="Ishida S."/>
            <person name="Ono Y."/>
            <person name="Takiguchi S."/>
            <person name="Watanabe S."/>
            <person name="Yosida M."/>
            <person name="Hotuta T."/>
            <person name="Kusano J."/>
            <person name="Kanehori K."/>
            <person name="Takahashi-Fujii A."/>
            <person name="Hara H."/>
            <person name="Tanase T.-O."/>
            <person name="Nomura Y."/>
            <person name="Togiya S."/>
            <person name="Komai F."/>
            <person name="Hara R."/>
            <person name="Takeuchi K."/>
            <person name="Arita M."/>
            <person name="Imose N."/>
            <person name="Musashino K."/>
            <person name="Yuuki H."/>
            <person name="Oshima A."/>
            <person name="Sasaki N."/>
            <person name="Aotsuka S."/>
            <person name="Yoshikawa Y."/>
            <person name="Matsunawa H."/>
            <person name="Ichihara T."/>
            <person name="Shiohata N."/>
            <person name="Sano S."/>
            <person name="Moriya S."/>
            <person name="Momiyama H."/>
            <person name="Satoh N."/>
            <person name="Takami S."/>
            <person name="Terashima Y."/>
            <person name="Suzuki O."/>
            <person name="Nakagawa S."/>
            <person name="Senoh A."/>
            <person name="Mizoguchi H."/>
            <person name="Goto Y."/>
            <person name="Shimizu F."/>
            <person name="Wakebe H."/>
            <person name="Hishigaki H."/>
            <person name="Watanabe T."/>
            <person name="Sugiyama A."/>
            <person name="Takemoto M."/>
            <person name="Kawakami B."/>
            <person name="Yamazaki M."/>
            <person name="Watanabe K."/>
            <person name="Kumagai A."/>
            <person name="Itakura S."/>
            <person name="Fukuzumi Y."/>
            <person name="Fujimori Y."/>
            <person name="Komiyama M."/>
            <person name="Tashiro H."/>
            <person name="Tanigami A."/>
            <person name="Fujiwara T."/>
            <person name="Ono T."/>
            <person name="Yamada K."/>
            <person name="Fujii Y."/>
            <person name="Ozaki K."/>
            <person name="Hirao M."/>
            <person name="Ohmori Y."/>
            <person name="Kawabata A."/>
            <person name="Hikiji T."/>
            <person name="Kobatake N."/>
            <person name="Inagaki H."/>
            <person name="Ikema Y."/>
            <person name="Okamoto S."/>
            <person name="Okitani R."/>
            <person name="Kawakami T."/>
            <person name="Noguchi S."/>
            <person name="Itoh T."/>
            <person name="Shigeta K."/>
            <person name="Senba T."/>
            <person name="Matsumura K."/>
            <person name="Nakajima Y."/>
            <person name="Mizuno T."/>
            <person name="Morinaga M."/>
            <person name="Sasaki M."/>
            <person name="Togashi T."/>
            <person name="Oyama M."/>
            <person name="Hata H."/>
            <person name="Watanabe M."/>
            <person name="Komatsu T."/>
            <person name="Mizushima-Sugano J."/>
            <person name="Satoh T."/>
            <person name="Shirai Y."/>
            <person name="Takahashi Y."/>
            <person name="Nakagawa K."/>
            <person name="Okumura K."/>
            <person name="Nagase T."/>
            <person name="Nomura N."/>
            <person name="Kikuchi H."/>
            <person name="Masuho Y."/>
            <person name="Yamashita R."/>
            <person name="Nakai K."/>
            <person name="Yada T."/>
            <person name="Nakamura Y."/>
            <person name="Ohara O."/>
            <person name="Isogai T."/>
            <person name="Sugano S."/>
        </authorList>
    </citation>
    <scope>NUCLEOTIDE SEQUENCE [LARGE SCALE MRNA] (ISOFORMS NON-BRAIN AND 4)</scope>
    <source>
        <tissue>Hippocampus</tissue>
    </source>
</reference>
<reference key="4">
    <citation type="submission" date="2005-10" db="EMBL/GenBank/DDBJ databases">
        <authorList>
            <person name="Lin L."/>
            <person name="Nong W."/>
            <person name="Zhou G."/>
            <person name="Ke R."/>
            <person name="Shen C."/>
            <person name="Zhong G."/>
            <person name="Zheng Z."/>
            <person name="Liang M."/>
            <person name="Tang Z."/>
            <person name="Huang B."/>
            <person name="Li H."/>
            <person name="Yang S."/>
        </authorList>
    </citation>
    <scope>NUCLEOTIDE SEQUENCE [LARGE SCALE MRNA] (ISOFORM 3)</scope>
</reference>
<reference key="5">
    <citation type="journal article" date="2004" name="Nature">
        <title>DNA sequence and analysis of human chromosome 9.</title>
        <authorList>
            <person name="Humphray S.J."/>
            <person name="Oliver K."/>
            <person name="Hunt A.R."/>
            <person name="Plumb R.W."/>
            <person name="Loveland J.E."/>
            <person name="Howe K.L."/>
            <person name="Andrews T.D."/>
            <person name="Searle S."/>
            <person name="Hunt S.E."/>
            <person name="Scott C.E."/>
            <person name="Jones M.C."/>
            <person name="Ainscough R."/>
            <person name="Almeida J.P."/>
            <person name="Ambrose K.D."/>
            <person name="Ashwell R.I.S."/>
            <person name="Babbage A.K."/>
            <person name="Babbage S."/>
            <person name="Bagguley C.L."/>
            <person name="Bailey J."/>
            <person name="Banerjee R."/>
            <person name="Barker D.J."/>
            <person name="Barlow K.F."/>
            <person name="Bates K."/>
            <person name="Beasley H."/>
            <person name="Beasley O."/>
            <person name="Bird C.P."/>
            <person name="Bray-Allen S."/>
            <person name="Brown A.J."/>
            <person name="Brown J.Y."/>
            <person name="Burford D."/>
            <person name="Burrill W."/>
            <person name="Burton J."/>
            <person name="Carder C."/>
            <person name="Carter N.P."/>
            <person name="Chapman J.C."/>
            <person name="Chen Y."/>
            <person name="Clarke G."/>
            <person name="Clark S.Y."/>
            <person name="Clee C.M."/>
            <person name="Clegg S."/>
            <person name="Collier R.E."/>
            <person name="Corby N."/>
            <person name="Crosier M."/>
            <person name="Cummings A.T."/>
            <person name="Davies J."/>
            <person name="Dhami P."/>
            <person name="Dunn M."/>
            <person name="Dutta I."/>
            <person name="Dyer L.W."/>
            <person name="Earthrowl M.E."/>
            <person name="Faulkner L."/>
            <person name="Fleming C.J."/>
            <person name="Frankish A."/>
            <person name="Frankland J.A."/>
            <person name="French L."/>
            <person name="Fricker D.G."/>
            <person name="Garner P."/>
            <person name="Garnett J."/>
            <person name="Ghori J."/>
            <person name="Gilbert J.G.R."/>
            <person name="Glison C."/>
            <person name="Grafham D.V."/>
            <person name="Gribble S."/>
            <person name="Griffiths C."/>
            <person name="Griffiths-Jones S."/>
            <person name="Grocock R."/>
            <person name="Guy J."/>
            <person name="Hall R.E."/>
            <person name="Hammond S."/>
            <person name="Harley J.L."/>
            <person name="Harrison E.S.I."/>
            <person name="Hart E.A."/>
            <person name="Heath P.D."/>
            <person name="Henderson C.D."/>
            <person name="Hopkins B.L."/>
            <person name="Howard P.J."/>
            <person name="Howden P.J."/>
            <person name="Huckle E."/>
            <person name="Johnson C."/>
            <person name="Johnson D."/>
            <person name="Joy A.A."/>
            <person name="Kay M."/>
            <person name="Keenan S."/>
            <person name="Kershaw J.K."/>
            <person name="Kimberley A.M."/>
            <person name="King A."/>
            <person name="Knights A."/>
            <person name="Laird G.K."/>
            <person name="Langford C."/>
            <person name="Lawlor S."/>
            <person name="Leongamornlert D.A."/>
            <person name="Leversha M."/>
            <person name="Lloyd C."/>
            <person name="Lloyd D.M."/>
            <person name="Lovell J."/>
            <person name="Martin S."/>
            <person name="Mashreghi-Mohammadi M."/>
            <person name="Matthews L."/>
            <person name="McLaren S."/>
            <person name="McLay K.E."/>
            <person name="McMurray A."/>
            <person name="Milne S."/>
            <person name="Nickerson T."/>
            <person name="Nisbett J."/>
            <person name="Nordsiek G."/>
            <person name="Pearce A.V."/>
            <person name="Peck A.I."/>
            <person name="Porter K.M."/>
            <person name="Pandian R."/>
            <person name="Pelan S."/>
            <person name="Phillimore B."/>
            <person name="Povey S."/>
            <person name="Ramsey Y."/>
            <person name="Rand V."/>
            <person name="Scharfe M."/>
            <person name="Sehra H.K."/>
            <person name="Shownkeen R."/>
            <person name="Sims S.K."/>
            <person name="Skuce C.D."/>
            <person name="Smith M."/>
            <person name="Steward C.A."/>
            <person name="Swarbreck D."/>
            <person name="Sycamore N."/>
            <person name="Tester J."/>
            <person name="Thorpe A."/>
            <person name="Tracey A."/>
            <person name="Tromans A."/>
            <person name="Thomas D.W."/>
            <person name="Wall M."/>
            <person name="Wallis J.M."/>
            <person name="West A.P."/>
            <person name="Whitehead S.L."/>
            <person name="Willey D.L."/>
            <person name="Williams S.A."/>
            <person name="Wilming L."/>
            <person name="Wray P.W."/>
            <person name="Young L."/>
            <person name="Ashurst J.L."/>
            <person name="Coulson A."/>
            <person name="Blocker H."/>
            <person name="Durbin R.M."/>
            <person name="Sulston J.E."/>
            <person name="Hubbard T."/>
            <person name="Jackson M.J."/>
            <person name="Bentley D.R."/>
            <person name="Beck S."/>
            <person name="Rogers J."/>
            <person name="Dunham I."/>
        </authorList>
    </citation>
    <scope>NUCLEOTIDE SEQUENCE [LARGE SCALE GENOMIC DNA]</scope>
</reference>
<reference key="6">
    <citation type="submission" date="2005-09" db="EMBL/GenBank/DDBJ databases">
        <authorList>
            <person name="Mural R.J."/>
            <person name="Istrail S."/>
            <person name="Sutton G.G."/>
            <person name="Florea L."/>
            <person name="Halpern A.L."/>
            <person name="Mobarry C.M."/>
            <person name="Lippert R."/>
            <person name="Walenz B."/>
            <person name="Shatkay H."/>
            <person name="Dew I."/>
            <person name="Miller J.R."/>
            <person name="Flanigan M.J."/>
            <person name="Edwards N.J."/>
            <person name="Bolanos R."/>
            <person name="Fasulo D."/>
            <person name="Halldorsson B.V."/>
            <person name="Hannenhalli S."/>
            <person name="Turner R."/>
            <person name="Yooseph S."/>
            <person name="Lu F."/>
            <person name="Nusskern D.R."/>
            <person name="Shue B.C."/>
            <person name="Zheng X.H."/>
            <person name="Zhong F."/>
            <person name="Delcher A.L."/>
            <person name="Huson D.H."/>
            <person name="Kravitz S.A."/>
            <person name="Mouchard L."/>
            <person name="Reinert K."/>
            <person name="Remington K.A."/>
            <person name="Clark A.G."/>
            <person name="Waterman M.S."/>
            <person name="Eichler E.E."/>
            <person name="Adams M.D."/>
            <person name="Hunkapiller M.W."/>
            <person name="Myers E.W."/>
            <person name="Venter J.C."/>
        </authorList>
    </citation>
    <scope>NUCLEOTIDE SEQUENCE [LARGE SCALE GENOMIC DNA]</scope>
</reference>
<reference key="7">
    <citation type="journal article" date="2004" name="Genome Res.">
        <title>The status, quality, and expansion of the NIH full-length cDNA project: the Mammalian Gene Collection (MGC).</title>
        <authorList>
            <consortium name="The MGC Project Team"/>
        </authorList>
    </citation>
    <scope>NUCLEOTIDE SEQUENCE [LARGE SCALE MRNA] (ISOFORM NON-BRAIN)</scope>
    <source>
        <tissue>Lung</tissue>
    </source>
</reference>
<reference key="8">
    <citation type="journal article" date="2005" name="Nature">
        <title>Clathrin is required for the function of the mitotic spindle.</title>
        <authorList>
            <person name="Royle S.J."/>
            <person name="Bright N.A."/>
            <person name="Lagnado L."/>
        </authorList>
    </citation>
    <scope>FUNCTION</scope>
    <scope>SUBCELLULAR LOCATION</scope>
</reference>
<reference key="9">
    <citation type="journal article" date="2006" name="J. Biol. Chem.">
        <title>Calcyon, a novel partner of clathrin light chain, stimulates clathrin-mediated endocytosis.</title>
        <authorList>
            <person name="Xiao J."/>
            <person name="Dai R."/>
            <person name="Negyessy L."/>
            <person name="Bergson C."/>
        </authorList>
    </citation>
    <scope>INTERACTION WITH CALY</scope>
</reference>
<reference key="10">
    <citation type="journal article" date="2008" name="Mol. Cell">
        <title>Kinase-selective enrichment enables quantitative phosphoproteomics of the kinome across the cell cycle.</title>
        <authorList>
            <person name="Daub H."/>
            <person name="Olsen J.V."/>
            <person name="Bairlein M."/>
            <person name="Gnad F."/>
            <person name="Oppermann F.S."/>
            <person name="Korner R."/>
            <person name="Greff Z."/>
            <person name="Keri G."/>
            <person name="Stemmann O."/>
            <person name="Mann M."/>
        </authorList>
    </citation>
    <scope>IDENTIFICATION BY MASS SPECTROMETRY [LARGE SCALE ANALYSIS]</scope>
    <source>
        <tissue>Cervix carcinoma</tissue>
    </source>
</reference>
<reference key="11">
    <citation type="journal article" date="2008" name="Proc. Natl. Acad. Sci. U.S.A.">
        <title>A quantitative atlas of mitotic phosphorylation.</title>
        <authorList>
            <person name="Dephoure N."/>
            <person name="Zhou C."/>
            <person name="Villen J."/>
            <person name="Beausoleil S.A."/>
            <person name="Bakalarski C.E."/>
            <person name="Elledge S.J."/>
            <person name="Gygi S.P."/>
        </authorList>
    </citation>
    <scope>PHOSPHORYLATION [LARGE SCALE ANALYSIS] AT SER-206 AND SER-236</scope>
    <scope>IDENTIFICATION BY MASS SPECTROMETRY [LARGE SCALE ANALYSIS]</scope>
    <source>
        <tissue>Cervix carcinoma</tissue>
    </source>
</reference>
<reference key="12">
    <citation type="journal article" date="2009" name="Mol. Cell. Proteomics">
        <title>Large-scale proteomics analysis of the human kinome.</title>
        <authorList>
            <person name="Oppermann F.S."/>
            <person name="Gnad F."/>
            <person name="Olsen J.V."/>
            <person name="Hornberger R."/>
            <person name="Greff Z."/>
            <person name="Keri G."/>
            <person name="Mann M."/>
            <person name="Daub H."/>
        </authorList>
    </citation>
    <scope>IDENTIFICATION BY MASS SPECTROMETRY [LARGE SCALE ANALYSIS]</scope>
</reference>
<reference key="13">
    <citation type="journal article" date="2010" name="Sci. Signal.">
        <title>Quantitative phosphoproteomics reveals widespread full phosphorylation site occupancy during mitosis.</title>
        <authorList>
            <person name="Olsen J.V."/>
            <person name="Vermeulen M."/>
            <person name="Santamaria A."/>
            <person name="Kumar C."/>
            <person name="Miller M.L."/>
            <person name="Jensen L.J."/>
            <person name="Gnad F."/>
            <person name="Cox J."/>
            <person name="Jensen T.S."/>
            <person name="Nigg E.A."/>
            <person name="Brunak S."/>
            <person name="Mann M."/>
        </authorList>
    </citation>
    <scope>PHOSPHORYLATION [LARGE SCALE ANALYSIS] AT SER-105 AND SER-206</scope>
    <scope>IDENTIFICATION BY MASS SPECTROMETRY [LARGE SCALE ANALYSIS]</scope>
    <source>
        <tissue>Cervix carcinoma</tissue>
    </source>
</reference>
<reference key="14">
    <citation type="journal article" date="2011" name="BMC Syst. Biol.">
        <title>Initial characterization of the human central proteome.</title>
        <authorList>
            <person name="Burkard T.R."/>
            <person name="Planyavsky M."/>
            <person name="Kaupe I."/>
            <person name="Breitwieser F.P."/>
            <person name="Buerckstuemmer T."/>
            <person name="Bennett K.L."/>
            <person name="Superti-Furga G."/>
            <person name="Colinge J."/>
        </authorList>
    </citation>
    <scope>IDENTIFICATION BY MASS SPECTROMETRY [LARGE SCALE ANALYSIS]</scope>
</reference>
<reference key="15">
    <citation type="journal article" date="2011" name="EMBO J.">
        <title>A TACC3/ch-TOG/clathrin complex stabilises kinetochore fibres by inter-microtubule bridging.</title>
        <authorList>
            <person name="Booth D.G."/>
            <person name="Hood F.E."/>
            <person name="Prior I.A."/>
            <person name="Royle S.J."/>
        </authorList>
    </citation>
    <scope>INTERACTION WITH TACC3 AND CKAP5</scope>
    <scope>FUNCTION</scope>
    <scope>SUBCELLULAR LOCATION</scope>
</reference>
<reference key="16">
    <citation type="journal article" date="2012" name="J. Proteome Res.">
        <title>Resveratrol-induced changes of the human adipocyte secretion profile.</title>
        <authorList>
            <person name="Rosenow A."/>
            <person name="Noben J.P."/>
            <person name="Jocken J."/>
            <person name="Kallendrusch S."/>
            <person name="Fischer-Posovszky P."/>
            <person name="Mariman E.C."/>
            <person name="Renes J."/>
        </authorList>
    </citation>
    <scope>IDENTIFICATION BY MASS SPECTROMETRY [LARGE SCALE ANALYSIS]</scope>
</reference>
<reference key="17">
    <citation type="journal article" date="2013" name="J. Proteome Res.">
        <title>Toward a comprehensive characterization of a human cancer cell phosphoproteome.</title>
        <authorList>
            <person name="Zhou H."/>
            <person name="Di Palma S."/>
            <person name="Preisinger C."/>
            <person name="Peng M."/>
            <person name="Polat A.N."/>
            <person name="Heck A.J."/>
            <person name="Mohammed S."/>
        </authorList>
    </citation>
    <scope>PHOSPHORYLATION [LARGE SCALE ANALYSIS] AT SER-105</scope>
    <scope>IDENTIFICATION BY MASS SPECTROMETRY [LARGE SCALE ANALYSIS]</scope>
    <source>
        <tissue>Cervix carcinoma</tissue>
        <tissue>Erythroleukemia</tissue>
    </source>
</reference>
<reference key="18">
    <citation type="journal article" date="2014" name="J. Proteomics">
        <title>An enzyme assisted RP-RPLC approach for in-depth analysis of human liver phosphoproteome.</title>
        <authorList>
            <person name="Bian Y."/>
            <person name="Song C."/>
            <person name="Cheng K."/>
            <person name="Dong M."/>
            <person name="Wang F."/>
            <person name="Huang J."/>
            <person name="Sun D."/>
            <person name="Wang L."/>
            <person name="Ye M."/>
            <person name="Zou H."/>
        </authorList>
    </citation>
    <scope>IDENTIFICATION BY MASS SPECTROMETRY [LARGE SCALE ANALYSIS]</scope>
    <source>
        <tissue>Liver</tissue>
    </source>
</reference>
<reference key="19">
    <citation type="journal article" date="2015" name="Proteomics">
        <title>N-terminome analysis of the human mitochondrial proteome.</title>
        <authorList>
            <person name="Vaca Jacome A.S."/>
            <person name="Rabilloud T."/>
            <person name="Schaeffer-Reiss C."/>
            <person name="Rompais M."/>
            <person name="Ayoub D."/>
            <person name="Lane L."/>
            <person name="Bairoch A."/>
            <person name="Van Dorsselaer A."/>
            <person name="Carapito C."/>
        </authorList>
    </citation>
    <scope>IDENTIFICATION BY MASS SPECTROMETRY [LARGE SCALE ANALYSIS]</scope>
</reference>
<organism>
    <name type="scientific">Homo sapiens</name>
    <name type="common">Human</name>
    <dbReference type="NCBI Taxonomy" id="9606"/>
    <lineage>
        <taxon>Eukaryota</taxon>
        <taxon>Metazoa</taxon>
        <taxon>Chordata</taxon>
        <taxon>Craniata</taxon>
        <taxon>Vertebrata</taxon>
        <taxon>Euteleostomi</taxon>
        <taxon>Mammalia</taxon>
        <taxon>Eutheria</taxon>
        <taxon>Euarchontoglires</taxon>
        <taxon>Primates</taxon>
        <taxon>Haplorrhini</taxon>
        <taxon>Catarrhini</taxon>
        <taxon>Hominidae</taxon>
        <taxon>Homo</taxon>
    </lineage>
</organism>
<feature type="chain" id="PRO_0000205767" description="Clathrin light chain A">
    <location>
        <begin position="1"/>
        <end position="248"/>
    </location>
</feature>
<feature type="region of interest" description="Disordered" evidence="3">
    <location>
        <begin position="1"/>
        <end position="92"/>
    </location>
</feature>
<feature type="region of interest" description="Involved in binding clathrin heavy chain">
    <location>
        <begin position="100"/>
        <end position="162"/>
    </location>
</feature>
<feature type="compositionally biased region" description="Gly residues" evidence="3">
    <location>
        <begin position="13"/>
        <end position="25"/>
    </location>
</feature>
<feature type="compositionally biased region" description="Pro residues" evidence="3">
    <location>
        <begin position="61"/>
        <end position="71"/>
    </location>
</feature>
<feature type="modified residue" description="Phosphoserine" evidence="15 16">
    <location>
        <position position="105"/>
    </location>
</feature>
<feature type="modified residue" description="Phosphoserine" evidence="14 15">
    <location>
        <position position="206"/>
    </location>
</feature>
<feature type="modified residue" description="N6-acetyllysine" evidence="2">
    <location>
        <position position="223"/>
    </location>
</feature>
<feature type="modified residue" description="Phosphoserine" evidence="14">
    <location>
        <position position="236"/>
    </location>
</feature>
<feature type="modified residue" description="N6-acetyllysine" evidence="1">
    <location>
        <position position="242"/>
    </location>
</feature>
<feature type="splice variant" id="VSP_047168" description="In isoform 5." evidence="11">
    <location>
        <begin position="73"/>
        <end position="124"/>
    </location>
</feature>
<feature type="splice variant" id="VSP_043239" description="In isoform 4." evidence="6">
    <original>RVADEAFYKQPFADVIGYV</original>
    <variation>S</variation>
    <location>
        <begin position="162"/>
        <end position="180"/>
    </location>
</feature>
<feature type="splice variant" id="VSP_001095" description="In isoform Non-brain and isoform 5." evidence="6 7 8 9">
    <location>
        <begin position="163"/>
        <end position="192"/>
    </location>
</feature>
<feature type="splice variant" id="VSP_024238" description="In isoform 3." evidence="10">
    <location>
        <begin position="181"/>
        <end position="192"/>
    </location>
</feature>
<feature type="sequence conflict" description="In Ref. 4; ABB76683." evidence="11" ref="4">
    <original>P</original>
    <variation>Q</variation>
    <location>
        <position position="207"/>
    </location>
</feature>
<feature type="helix" evidence="17">
    <location>
        <begin position="47"/>
        <end position="54"/>
    </location>
</feature>
<feature type="turn" evidence="17">
    <location>
        <begin position="55"/>
        <end position="57"/>
    </location>
</feature>